<organism>
    <name type="scientific">Streptococcus equi subsp. zooepidemicus (strain H70)</name>
    <dbReference type="NCBI Taxonomy" id="553483"/>
    <lineage>
        <taxon>Bacteria</taxon>
        <taxon>Bacillati</taxon>
        <taxon>Bacillota</taxon>
        <taxon>Bacilli</taxon>
        <taxon>Lactobacillales</taxon>
        <taxon>Streptococcaceae</taxon>
        <taxon>Streptococcus</taxon>
    </lineage>
</organism>
<feature type="chain" id="PRO_1000214717" description="Large ribosomal subunit protein uL15">
    <location>
        <begin position="1"/>
        <end position="146"/>
    </location>
</feature>
<feature type="region of interest" description="Disordered" evidence="2">
    <location>
        <begin position="1"/>
        <end position="51"/>
    </location>
</feature>
<feature type="compositionally biased region" description="Basic residues" evidence="2">
    <location>
        <begin position="10"/>
        <end position="19"/>
    </location>
</feature>
<feature type="compositionally biased region" description="Gly residues" evidence="2">
    <location>
        <begin position="23"/>
        <end position="35"/>
    </location>
</feature>
<feature type="compositionally biased region" description="Gly residues" evidence="2">
    <location>
        <begin position="42"/>
        <end position="51"/>
    </location>
</feature>
<protein>
    <recommendedName>
        <fullName evidence="1">Large ribosomal subunit protein uL15</fullName>
    </recommendedName>
    <alternativeName>
        <fullName evidence="3">50S ribosomal protein L15</fullName>
    </alternativeName>
</protein>
<accession>C0ME24</accession>
<gene>
    <name evidence="1" type="primary">rplO</name>
    <name type="ordered locus">SZO_00690</name>
</gene>
<evidence type="ECO:0000255" key="1">
    <source>
        <dbReference type="HAMAP-Rule" id="MF_01341"/>
    </source>
</evidence>
<evidence type="ECO:0000256" key="2">
    <source>
        <dbReference type="SAM" id="MobiDB-lite"/>
    </source>
</evidence>
<evidence type="ECO:0000305" key="3"/>
<keyword id="KW-0687">Ribonucleoprotein</keyword>
<keyword id="KW-0689">Ribosomal protein</keyword>
<keyword id="KW-0694">RNA-binding</keyword>
<keyword id="KW-0699">rRNA-binding</keyword>
<sequence length="146" mass="15462">MKLHELKPAKGSRKVRNRVGRGTSSGNGKTSGRGQKGQKARSGGGVRLGFEGGQTPLFRRIPKRGFTNINTKEYALVNLDQLNAFEDGTEVTPVVLKEAGIVRAEKSGVKILGNGELTKKLTVKAAKFSKSAEAAITAKGGSIEVI</sequence>
<name>RL15_STRS7</name>
<proteinExistence type="inferred from homology"/>
<reference key="1">
    <citation type="journal article" date="2009" name="PLoS Pathog.">
        <title>Genomic evidence for the evolution of Streptococcus equi: host restriction, increased virulence, and genetic exchange with human pathogens.</title>
        <authorList>
            <person name="Holden M.T.G."/>
            <person name="Heather Z."/>
            <person name="Paillot R."/>
            <person name="Steward K.F."/>
            <person name="Webb K."/>
            <person name="Ainslie F."/>
            <person name="Jourdan T."/>
            <person name="Bason N.C."/>
            <person name="Holroyd N.E."/>
            <person name="Mungall K."/>
            <person name="Quail M.A."/>
            <person name="Sanders M."/>
            <person name="Simmonds M."/>
            <person name="Willey D."/>
            <person name="Brooks K."/>
            <person name="Aanensen D.M."/>
            <person name="Spratt B.G."/>
            <person name="Jolley K.A."/>
            <person name="Maiden M.C.J."/>
            <person name="Kehoe M."/>
            <person name="Chanter N."/>
            <person name="Bentley S.D."/>
            <person name="Robinson C."/>
            <person name="Maskell D.J."/>
            <person name="Parkhill J."/>
            <person name="Waller A.S."/>
        </authorList>
    </citation>
    <scope>NUCLEOTIDE SEQUENCE [LARGE SCALE GENOMIC DNA]</scope>
    <source>
        <strain>H70</strain>
    </source>
</reference>
<comment type="function">
    <text evidence="1">Binds to the 23S rRNA.</text>
</comment>
<comment type="subunit">
    <text evidence="1">Part of the 50S ribosomal subunit.</text>
</comment>
<comment type="similarity">
    <text evidence="1">Belongs to the universal ribosomal protein uL15 family.</text>
</comment>
<dbReference type="EMBL" id="FM204884">
    <property type="protein sequence ID" value="CAW97677.1"/>
    <property type="molecule type" value="Genomic_DNA"/>
</dbReference>
<dbReference type="SMR" id="C0ME24"/>
<dbReference type="KEGG" id="seq:SZO_00690"/>
<dbReference type="eggNOG" id="COG0200">
    <property type="taxonomic scope" value="Bacteria"/>
</dbReference>
<dbReference type="HOGENOM" id="CLU_055188_4_2_9"/>
<dbReference type="Proteomes" id="UP000001368">
    <property type="component" value="Chromosome"/>
</dbReference>
<dbReference type="GO" id="GO:0022625">
    <property type="term" value="C:cytosolic large ribosomal subunit"/>
    <property type="evidence" value="ECO:0007669"/>
    <property type="project" value="TreeGrafter"/>
</dbReference>
<dbReference type="GO" id="GO:0019843">
    <property type="term" value="F:rRNA binding"/>
    <property type="evidence" value="ECO:0007669"/>
    <property type="project" value="UniProtKB-UniRule"/>
</dbReference>
<dbReference type="GO" id="GO:0003735">
    <property type="term" value="F:structural constituent of ribosome"/>
    <property type="evidence" value="ECO:0007669"/>
    <property type="project" value="InterPro"/>
</dbReference>
<dbReference type="GO" id="GO:0006412">
    <property type="term" value="P:translation"/>
    <property type="evidence" value="ECO:0007669"/>
    <property type="project" value="UniProtKB-UniRule"/>
</dbReference>
<dbReference type="FunFam" id="3.100.10.10:FF:000004">
    <property type="entry name" value="50S ribosomal protein L15"/>
    <property type="match status" value="1"/>
</dbReference>
<dbReference type="Gene3D" id="3.100.10.10">
    <property type="match status" value="1"/>
</dbReference>
<dbReference type="HAMAP" id="MF_01341">
    <property type="entry name" value="Ribosomal_uL15"/>
    <property type="match status" value="1"/>
</dbReference>
<dbReference type="InterPro" id="IPR030878">
    <property type="entry name" value="Ribosomal_uL15"/>
</dbReference>
<dbReference type="InterPro" id="IPR021131">
    <property type="entry name" value="Ribosomal_uL15/eL18"/>
</dbReference>
<dbReference type="InterPro" id="IPR036227">
    <property type="entry name" value="Ribosomal_uL15/eL18_sf"/>
</dbReference>
<dbReference type="InterPro" id="IPR005749">
    <property type="entry name" value="Ribosomal_uL15_bac-type"/>
</dbReference>
<dbReference type="InterPro" id="IPR001196">
    <property type="entry name" value="Ribosomal_uL15_CS"/>
</dbReference>
<dbReference type="NCBIfam" id="TIGR01071">
    <property type="entry name" value="rplO_bact"/>
    <property type="match status" value="1"/>
</dbReference>
<dbReference type="PANTHER" id="PTHR12934">
    <property type="entry name" value="50S RIBOSOMAL PROTEIN L15"/>
    <property type="match status" value="1"/>
</dbReference>
<dbReference type="PANTHER" id="PTHR12934:SF11">
    <property type="entry name" value="LARGE RIBOSOMAL SUBUNIT PROTEIN UL15M"/>
    <property type="match status" value="1"/>
</dbReference>
<dbReference type="Pfam" id="PF00828">
    <property type="entry name" value="Ribosomal_L27A"/>
    <property type="match status" value="1"/>
</dbReference>
<dbReference type="SUPFAM" id="SSF52080">
    <property type="entry name" value="Ribosomal proteins L15p and L18e"/>
    <property type="match status" value="1"/>
</dbReference>
<dbReference type="PROSITE" id="PS00475">
    <property type="entry name" value="RIBOSOMAL_L15"/>
    <property type="match status" value="1"/>
</dbReference>